<evidence type="ECO:0000255" key="1">
    <source>
        <dbReference type="HAMAP-Rule" id="MF_00739"/>
    </source>
</evidence>
<reference key="1">
    <citation type="journal article" date="2004" name="Nature">
        <title>Genome sequence of Silicibacter pomeroyi reveals adaptations to the marine environment.</title>
        <authorList>
            <person name="Moran M.A."/>
            <person name="Buchan A."/>
            <person name="Gonzalez J.M."/>
            <person name="Heidelberg J.F."/>
            <person name="Whitman W.B."/>
            <person name="Kiene R.P."/>
            <person name="Henriksen J.R."/>
            <person name="King G.M."/>
            <person name="Belas R."/>
            <person name="Fuqua C."/>
            <person name="Brinkac L.M."/>
            <person name="Lewis M."/>
            <person name="Johri S."/>
            <person name="Weaver B."/>
            <person name="Pai G."/>
            <person name="Eisen J.A."/>
            <person name="Rahe E."/>
            <person name="Sheldon W.M."/>
            <person name="Ye W."/>
            <person name="Miller T.R."/>
            <person name="Carlton J."/>
            <person name="Rasko D.A."/>
            <person name="Paulsen I.T."/>
            <person name="Ren Q."/>
            <person name="Daugherty S.C."/>
            <person name="DeBoy R.T."/>
            <person name="Dodson R.J."/>
            <person name="Durkin A.S."/>
            <person name="Madupu R."/>
            <person name="Nelson W.C."/>
            <person name="Sullivan S.A."/>
            <person name="Rosovitz M.J."/>
            <person name="Haft D.H."/>
            <person name="Selengut J."/>
            <person name="Ward N."/>
        </authorList>
    </citation>
    <scope>NUCLEOTIDE SEQUENCE [LARGE SCALE GENOMIC DNA]</scope>
    <source>
        <strain>ATCC 700808 / DSM 15171 / DSS-3</strain>
    </source>
</reference>
<reference key="2">
    <citation type="journal article" date="2014" name="Stand. Genomic Sci.">
        <title>An updated genome annotation for the model marine bacterium Ruegeria pomeroyi DSS-3.</title>
        <authorList>
            <person name="Rivers A.R."/>
            <person name="Smith C.B."/>
            <person name="Moran M.A."/>
        </authorList>
    </citation>
    <scope>GENOME REANNOTATION</scope>
    <source>
        <strain>ATCC 700808 / DSM 15171 / DSS-3</strain>
    </source>
</reference>
<proteinExistence type="inferred from homology"/>
<sequence>MNLTPREKDKLLIAMAAEVARKRRARGVKLNHPEAIALISDAVVEGARDGRSVADLMQAGAEVIRAEDCMEGIAQMILEVQVEATFPDGTKLVTVHNPIR</sequence>
<keyword id="KW-0963">Cytoplasm</keyword>
<keyword id="KW-0378">Hydrolase</keyword>
<keyword id="KW-1185">Reference proteome</keyword>
<feature type="chain" id="PRO_0000234215" description="Urease subunit gamma">
    <location>
        <begin position="1"/>
        <end position="100"/>
    </location>
</feature>
<gene>
    <name evidence="1" type="primary">ureA</name>
    <name type="ordered locus">SPO1712</name>
</gene>
<protein>
    <recommendedName>
        <fullName evidence="1">Urease subunit gamma</fullName>
        <ecNumber evidence="1">3.5.1.5</ecNumber>
    </recommendedName>
    <alternativeName>
        <fullName evidence="1">Urea amidohydrolase subunit gamma</fullName>
    </alternativeName>
</protein>
<accession>Q5LSQ4</accession>
<name>URE3_RUEPO</name>
<organism>
    <name type="scientific">Ruegeria pomeroyi (strain ATCC 700808 / DSM 15171 / DSS-3)</name>
    <name type="common">Silicibacter pomeroyi</name>
    <dbReference type="NCBI Taxonomy" id="246200"/>
    <lineage>
        <taxon>Bacteria</taxon>
        <taxon>Pseudomonadati</taxon>
        <taxon>Pseudomonadota</taxon>
        <taxon>Alphaproteobacteria</taxon>
        <taxon>Rhodobacterales</taxon>
        <taxon>Roseobacteraceae</taxon>
        <taxon>Ruegeria</taxon>
    </lineage>
</organism>
<comment type="catalytic activity">
    <reaction evidence="1">
        <text>urea + 2 H2O + H(+) = hydrogencarbonate + 2 NH4(+)</text>
        <dbReference type="Rhea" id="RHEA:20557"/>
        <dbReference type="ChEBI" id="CHEBI:15377"/>
        <dbReference type="ChEBI" id="CHEBI:15378"/>
        <dbReference type="ChEBI" id="CHEBI:16199"/>
        <dbReference type="ChEBI" id="CHEBI:17544"/>
        <dbReference type="ChEBI" id="CHEBI:28938"/>
        <dbReference type="EC" id="3.5.1.5"/>
    </reaction>
</comment>
<comment type="pathway">
    <text evidence="1">Nitrogen metabolism; urea degradation; CO(2) and NH(3) from urea (urease route): step 1/1.</text>
</comment>
<comment type="subunit">
    <text evidence="1">Heterotrimer of UreA (gamma), UreB (beta) and UreC (alpha) subunits. Three heterotrimers associate to form the active enzyme.</text>
</comment>
<comment type="subcellular location">
    <subcellularLocation>
        <location evidence="1">Cytoplasm</location>
    </subcellularLocation>
</comment>
<comment type="similarity">
    <text evidence="1">Belongs to the urease gamma subunit family.</text>
</comment>
<dbReference type="EC" id="3.5.1.5" evidence="1"/>
<dbReference type="EMBL" id="CP000031">
    <property type="protein sequence ID" value="AAV94995.1"/>
    <property type="molecule type" value="Genomic_DNA"/>
</dbReference>
<dbReference type="RefSeq" id="WP_011047447.1">
    <property type="nucleotide sequence ID" value="NC_003911.12"/>
</dbReference>
<dbReference type="SMR" id="Q5LSQ4"/>
<dbReference type="STRING" id="246200.SPO1712"/>
<dbReference type="PaxDb" id="246200-SPO1712"/>
<dbReference type="KEGG" id="sil:SPO1712"/>
<dbReference type="eggNOG" id="COG0831">
    <property type="taxonomic scope" value="Bacteria"/>
</dbReference>
<dbReference type="HOGENOM" id="CLU_145825_1_0_5"/>
<dbReference type="OrthoDB" id="9797217at2"/>
<dbReference type="UniPathway" id="UPA00258">
    <property type="reaction ID" value="UER00370"/>
</dbReference>
<dbReference type="Proteomes" id="UP000001023">
    <property type="component" value="Chromosome"/>
</dbReference>
<dbReference type="GO" id="GO:0005737">
    <property type="term" value="C:cytoplasm"/>
    <property type="evidence" value="ECO:0007669"/>
    <property type="project" value="UniProtKB-SubCell"/>
</dbReference>
<dbReference type="GO" id="GO:0016151">
    <property type="term" value="F:nickel cation binding"/>
    <property type="evidence" value="ECO:0007669"/>
    <property type="project" value="InterPro"/>
</dbReference>
<dbReference type="GO" id="GO:0009039">
    <property type="term" value="F:urease activity"/>
    <property type="evidence" value="ECO:0007669"/>
    <property type="project" value="UniProtKB-UniRule"/>
</dbReference>
<dbReference type="GO" id="GO:0043419">
    <property type="term" value="P:urea catabolic process"/>
    <property type="evidence" value="ECO:0007669"/>
    <property type="project" value="UniProtKB-UniRule"/>
</dbReference>
<dbReference type="CDD" id="cd00390">
    <property type="entry name" value="Urease_gamma"/>
    <property type="match status" value="1"/>
</dbReference>
<dbReference type="Gene3D" id="3.30.280.10">
    <property type="entry name" value="Urease, gamma-like subunit"/>
    <property type="match status" value="1"/>
</dbReference>
<dbReference type="HAMAP" id="MF_00739">
    <property type="entry name" value="Urease_gamma"/>
    <property type="match status" value="1"/>
</dbReference>
<dbReference type="InterPro" id="IPR012010">
    <property type="entry name" value="Urease_gamma"/>
</dbReference>
<dbReference type="InterPro" id="IPR002026">
    <property type="entry name" value="Urease_gamma/gamma-beta_su"/>
</dbReference>
<dbReference type="InterPro" id="IPR036463">
    <property type="entry name" value="Urease_gamma_sf"/>
</dbReference>
<dbReference type="InterPro" id="IPR050069">
    <property type="entry name" value="Urease_subunit"/>
</dbReference>
<dbReference type="NCBIfam" id="NF009712">
    <property type="entry name" value="PRK13241.1"/>
    <property type="match status" value="1"/>
</dbReference>
<dbReference type="NCBIfam" id="TIGR00193">
    <property type="entry name" value="urease_gam"/>
    <property type="match status" value="1"/>
</dbReference>
<dbReference type="PANTHER" id="PTHR33569">
    <property type="entry name" value="UREASE"/>
    <property type="match status" value="1"/>
</dbReference>
<dbReference type="PANTHER" id="PTHR33569:SF1">
    <property type="entry name" value="UREASE"/>
    <property type="match status" value="1"/>
</dbReference>
<dbReference type="Pfam" id="PF00547">
    <property type="entry name" value="Urease_gamma"/>
    <property type="match status" value="1"/>
</dbReference>
<dbReference type="PIRSF" id="PIRSF001223">
    <property type="entry name" value="Urease_gamma"/>
    <property type="match status" value="1"/>
</dbReference>
<dbReference type="SUPFAM" id="SSF54111">
    <property type="entry name" value="Urease, gamma-subunit"/>
    <property type="match status" value="1"/>
</dbReference>